<accession>B6I7R1</accession>
<dbReference type="EC" id="2.7.1.6" evidence="1"/>
<dbReference type="EMBL" id="AP009240">
    <property type="protein sequence ID" value="BAG76334.1"/>
    <property type="molecule type" value="Genomic_DNA"/>
</dbReference>
<dbReference type="RefSeq" id="WP_000053415.1">
    <property type="nucleotide sequence ID" value="NC_011415.1"/>
</dbReference>
<dbReference type="SMR" id="B6I7R1"/>
<dbReference type="GeneID" id="75170756"/>
<dbReference type="KEGG" id="ecy:ECSE_0810"/>
<dbReference type="HOGENOM" id="CLU_017814_2_1_6"/>
<dbReference type="UniPathway" id="UPA00214"/>
<dbReference type="Proteomes" id="UP000008199">
    <property type="component" value="Chromosome"/>
</dbReference>
<dbReference type="GO" id="GO:0005829">
    <property type="term" value="C:cytosol"/>
    <property type="evidence" value="ECO:0007669"/>
    <property type="project" value="TreeGrafter"/>
</dbReference>
<dbReference type="GO" id="GO:0005524">
    <property type="term" value="F:ATP binding"/>
    <property type="evidence" value="ECO:0007669"/>
    <property type="project" value="UniProtKB-UniRule"/>
</dbReference>
<dbReference type="GO" id="GO:0004335">
    <property type="term" value="F:galactokinase activity"/>
    <property type="evidence" value="ECO:0007669"/>
    <property type="project" value="UniProtKB-UniRule"/>
</dbReference>
<dbReference type="GO" id="GO:0000287">
    <property type="term" value="F:magnesium ion binding"/>
    <property type="evidence" value="ECO:0007669"/>
    <property type="project" value="UniProtKB-UniRule"/>
</dbReference>
<dbReference type="GO" id="GO:0006012">
    <property type="term" value="P:galactose metabolic process"/>
    <property type="evidence" value="ECO:0007669"/>
    <property type="project" value="UniProtKB-UniRule"/>
</dbReference>
<dbReference type="FunFam" id="3.30.230.10:FF:000017">
    <property type="entry name" value="Galactokinase"/>
    <property type="match status" value="1"/>
</dbReference>
<dbReference type="FunFam" id="3.30.70.890:FF:000001">
    <property type="entry name" value="Galactokinase"/>
    <property type="match status" value="1"/>
</dbReference>
<dbReference type="Gene3D" id="3.30.230.10">
    <property type="match status" value="1"/>
</dbReference>
<dbReference type="Gene3D" id="3.30.70.890">
    <property type="entry name" value="GHMP kinase, C-terminal domain"/>
    <property type="match status" value="1"/>
</dbReference>
<dbReference type="HAMAP" id="MF_00246">
    <property type="entry name" value="Galactokinase"/>
    <property type="match status" value="1"/>
</dbReference>
<dbReference type="InterPro" id="IPR000705">
    <property type="entry name" value="Galactokinase"/>
</dbReference>
<dbReference type="InterPro" id="IPR022963">
    <property type="entry name" value="Galactokinase_bac"/>
</dbReference>
<dbReference type="InterPro" id="IPR019741">
    <property type="entry name" value="Galactokinase_CS"/>
</dbReference>
<dbReference type="InterPro" id="IPR019539">
    <property type="entry name" value="GalKase_N"/>
</dbReference>
<dbReference type="InterPro" id="IPR013750">
    <property type="entry name" value="GHMP_kinase_C_dom"/>
</dbReference>
<dbReference type="InterPro" id="IPR036554">
    <property type="entry name" value="GHMP_kinase_C_sf"/>
</dbReference>
<dbReference type="InterPro" id="IPR006204">
    <property type="entry name" value="GHMP_kinase_N_dom"/>
</dbReference>
<dbReference type="InterPro" id="IPR006203">
    <property type="entry name" value="GHMP_knse_ATP-bd_CS"/>
</dbReference>
<dbReference type="InterPro" id="IPR006206">
    <property type="entry name" value="Mevalonate/galactokinase"/>
</dbReference>
<dbReference type="InterPro" id="IPR020568">
    <property type="entry name" value="Ribosomal_Su5_D2-typ_SF"/>
</dbReference>
<dbReference type="InterPro" id="IPR014721">
    <property type="entry name" value="Ribsml_uS5_D2-typ_fold_subgr"/>
</dbReference>
<dbReference type="NCBIfam" id="TIGR00131">
    <property type="entry name" value="gal_kin"/>
    <property type="match status" value="1"/>
</dbReference>
<dbReference type="NCBIfam" id="NF003472">
    <property type="entry name" value="PRK05101.1"/>
    <property type="match status" value="1"/>
</dbReference>
<dbReference type="PANTHER" id="PTHR10457:SF7">
    <property type="entry name" value="GALACTOKINASE-RELATED"/>
    <property type="match status" value="1"/>
</dbReference>
<dbReference type="PANTHER" id="PTHR10457">
    <property type="entry name" value="MEVALONATE KINASE/GALACTOKINASE"/>
    <property type="match status" value="1"/>
</dbReference>
<dbReference type="Pfam" id="PF10509">
    <property type="entry name" value="GalKase_gal_bdg"/>
    <property type="match status" value="1"/>
</dbReference>
<dbReference type="Pfam" id="PF08544">
    <property type="entry name" value="GHMP_kinases_C"/>
    <property type="match status" value="1"/>
</dbReference>
<dbReference type="Pfam" id="PF00288">
    <property type="entry name" value="GHMP_kinases_N"/>
    <property type="match status" value="1"/>
</dbReference>
<dbReference type="PIRSF" id="PIRSF000530">
    <property type="entry name" value="Galactokinase"/>
    <property type="match status" value="1"/>
</dbReference>
<dbReference type="PRINTS" id="PR00473">
    <property type="entry name" value="GALCTOKINASE"/>
</dbReference>
<dbReference type="PRINTS" id="PR00959">
    <property type="entry name" value="MEVGALKINASE"/>
</dbReference>
<dbReference type="SUPFAM" id="SSF55060">
    <property type="entry name" value="GHMP Kinase, C-terminal domain"/>
    <property type="match status" value="1"/>
</dbReference>
<dbReference type="SUPFAM" id="SSF54211">
    <property type="entry name" value="Ribosomal protein S5 domain 2-like"/>
    <property type="match status" value="1"/>
</dbReference>
<dbReference type="PROSITE" id="PS00106">
    <property type="entry name" value="GALACTOKINASE"/>
    <property type="match status" value="1"/>
</dbReference>
<dbReference type="PROSITE" id="PS00627">
    <property type="entry name" value="GHMP_KINASES_ATP"/>
    <property type="match status" value="1"/>
</dbReference>
<comment type="function">
    <text evidence="1">Catalyzes the transfer of the gamma-phosphate of ATP to D-galactose to form alpha-D-galactose-1-phosphate (Gal-1-P).</text>
</comment>
<comment type="catalytic activity">
    <reaction evidence="1">
        <text>alpha-D-galactose + ATP = alpha-D-galactose 1-phosphate + ADP + H(+)</text>
        <dbReference type="Rhea" id="RHEA:13553"/>
        <dbReference type="ChEBI" id="CHEBI:15378"/>
        <dbReference type="ChEBI" id="CHEBI:28061"/>
        <dbReference type="ChEBI" id="CHEBI:30616"/>
        <dbReference type="ChEBI" id="CHEBI:58336"/>
        <dbReference type="ChEBI" id="CHEBI:456216"/>
        <dbReference type="EC" id="2.7.1.6"/>
    </reaction>
</comment>
<comment type="pathway">
    <text evidence="1">Carbohydrate metabolism; galactose metabolism.</text>
</comment>
<comment type="subcellular location">
    <subcellularLocation>
        <location evidence="1">Cytoplasm</location>
    </subcellularLocation>
</comment>
<comment type="similarity">
    <text evidence="1">Belongs to the GHMP kinase family. GalK subfamily.</text>
</comment>
<protein>
    <recommendedName>
        <fullName evidence="1">Galactokinase</fullName>
        <ecNumber evidence="1">2.7.1.6</ecNumber>
    </recommendedName>
    <alternativeName>
        <fullName evidence="1">Galactose kinase</fullName>
    </alternativeName>
</protein>
<sequence length="382" mass="41442">MSLKEKTQSLFANAFGYPATHTIQAPGRVNLIGEHTDYNDGFVLPCAIDYQTVISCAPRDDRKVRVMAADYENQLDEFSLDAPIVAHENYQWANYVRGVVKHLQLRNNSFGGVDMVISGNVPQGAGLSSSASLEVAVGTVLQQLYHLPLDGAQIALNGQEAENQFVGCNCGIMDQLISALGKKDHALLIDCRSLGTKAVSMPKGVAVVIINSNFKRTLVGSEYNTRREQCETGARFFQQPALRDVTIEEFNAVAHELDPIVAKRVRHILTENARTVEAASALEQGDLKRMGELMAESHASMRDDFEITVPQIDTLVEIVKAVIGDKGGVRMTGGGFGGCIVALIPEELVPAVQQAVAEQYEAKTGIKETFYVCKPSQGAGQC</sequence>
<gene>
    <name evidence="1" type="primary">galK</name>
    <name type="ordered locus">ECSE_0810</name>
</gene>
<reference key="1">
    <citation type="journal article" date="2008" name="DNA Res.">
        <title>Complete genome sequence and comparative analysis of the wild-type commensal Escherichia coli strain SE11 isolated from a healthy adult.</title>
        <authorList>
            <person name="Oshima K."/>
            <person name="Toh H."/>
            <person name="Ogura Y."/>
            <person name="Sasamoto H."/>
            <person name="Morita H."/>
            <person name="Park S.-H."/>
            <person name="Ooka T."/>
            <person name="Iyoda S."/>
            <person name="Taylor T.D."/>
            <person name="Hayashi T."/>
            <person name="Itoh K."/>
            <person name="Hattori M."/>
        </authorList>
    </citation>
    <scope>NUCLEOTIDE SEQUENCE [LARGE SCALE GENOMIC DNA]</scope>
    <source>
        <strain>SE11</strain>
    </source>
</reference>
<name>GAL1_ECOSE</name>
<keyword id="KW-0067">ATP-binding</keyword>
<keyword id="KW-0119">Carbohydrate metabolism</keyword>
<keyword id="KW-0963">Cytoplasm</keyword>
<keyword id="KW-0299">Galactose metabolism</keyword>
<keyword id="KW-0418">Kinase</keyword>
<keyword id="KW-0460">Magnesium</keyword>
<keyword id="KW-0479">Metal-binding</keyword>
<keyword id="KW-0547">Nucleotide-binding</keyword>
<keyword id="KW-0808">Transferase</keyword>
<organism>
    <name type="scientific">Escherichia coli (strain SE11)</name>
    <dbReference type="NCBI Taxonomy" id="409438"/>
    <lineage>
        <taxon>Bacteria</taxon>
        <taxon>Pseudomonadati</taxon>
        <taxon>Pseudomonadota</taxon>
        <taxon>Gammaproteobacteria</taxon>
        <taxon>Enterobacterales</taxon>
        <taxon>Enterobacteriaceae</taxon>
        <taxon>Escherichia</taxon>
    </lineage>
</organism>
<evidence type="ECO:0000255" key="1">
    <source>
        <dbReference type="HAMAP-Rule" id="MF_00246"/>
    </source>
</evidence>
<feature type="chain" id="PRO_1000100828" description="Galactokinase">
    <location>
        <begin position="1"/>
        <end position="382"/>
    </location>
</feature>
<feature type="active site" description="Proton acceptor" evidence="1">
    <location>
        <position position="174"/>
    </location>
</feature>
<feature type="binding site" evidence="1">
    <location>
        <begin position="34"/>
        <end position="37"/>
    </location>
    <ligand>
        <name>substrate</name>
    </ligand>
</feature>
<feature type="binding site" evidence="1">
    <location>
        <begin position="124"/>
        <end position="130"/>
    </location>
    <ligand>
        <name>ATP</name>
        <dbReference type="ChEBI" id="CHEBI:30616"/>
    </ligand>
</feature>
<feature type="binding site" evidence="1">
    <location>
        <position position="130"/>
    </location>
    <ligand>
        <name>Mg(2+)</name>
        <dbReference type="ChEBI" id="CHEBI:18420"/>
    </ligand>
</feature>
<feature type="binding site" evidence="1">
    <location>
        <position position="162"/>
    </location>
    <ligand>
        <name>Mg(2+)</name>
        <dbReference type="ChEBI" id="CHEBI:18420"/>
    </ligand>
</feature>
<feature type="binding site" evidence="1">
    <location>
        <position position="223"/>
    </location>
    <ligand>
        <name>substrate</name>
    </ligand>
</feature>
<feature type="site" description="Transition state stabilizer" evidence="1">
    <location>
        <position position="28"/>
    </location>
</feature>
<proteinExistence type="inferred from homology"/>